<accession>Q9VD28</accession>
<organism evidence="10">
    <name type="scientific">Drosophila melanogaster</name>
    <name type="common">Fruit fly</name>
    <dbReference type="NCBI Taxonomy" id="7227"/>
    <lineage>
        <taxon>Eukaryota</taxon>
        <taxon>Metazoa</taxon>
        <taxon>Ecdysozoa</taxon>
        <taxon>Arthropoda</taxon>
        <taxon>Hexapoda</taxon>
        <taxon>Insecta</taxon>
        <taxon>Pterygota</taxon>
        <taxon>Neoptera</taxon>
        <taxon>Endopterygota</taxon>
        <taxon>Diptera</taxon>
        <taxon>Brachycera</taxon>
        <taxon>Muscomorpha</taxon>
        <taxon>Ephydroidea</taxon>
        <taxon>Drosophilidae</taxon>
        <taxon>Drosophila</taxon>
        <taxon>Sophophora</taxon>
    </lineage>
</organism>
<feature type="chain" id="PRO_0000129379" description="Bifunctional arginine demethylase and lysyl-hydroxylase JMJD6">
    <location>
        <begin position="1"/>
        <end position="408"/>
    </location>
</feature>
<feature type="domain" description="JmjC" evidence="3">
    <location>
        <begin position="146"/>
        <end position="310"/>
    </location>
</feature>
<feature type="region of interest" description="Disordered" evidence="4">
    <location>
        <begin position="1"/>
        <end position="25"/>
    </location>
</feature>
<feature type="region of interest" description="Disordered" evidence="4">
    <location>
        <begin position="342"/>
        <end position="408"/>
    </location>
</feature>
<feature type="compositionally biased region" description="Basic residues" evidence="4">
    <location>
        <begin position="8"/>
        <end position="22"/>
    </location>
</feature>
<feature type="compositionally biased region" description="Low complexity" evidence="4">
    <location>
        <begin position="345"/>
        <end position="361"/>
    </location>
</feature>
<feature type="compositionally biased region" description="Acidic residues" evidence="4">
    <location>
        <begin position="362"/>
        <end position="371"/>
    </location>
</feature>
<feature type="compositionally biased region" description="Gly residues" evidence="4">
    <location>
        <begin position="393"/>
        <end position="408"/>
    </location>
</feature>
<feature type="binding site" evidence="1">
    <location>
        <position position="189"/>
    </location>
    <ligand>
        <name>substrate</name>
    </ligand>
</feature>
<feature type="binding site" evidence="3">
    <location>
        <position position="192"/>
    </location>
    <ligand>
        <name>Fe cation</name>
        <dbReference type="ChEBI" id="CHEBI:24875"/>
        <note>catalytic</note>
    </ligand>
</feature>
<feature type="binding site" evidence="3">
    <location>
        <position position="194"/>
    </location>
    <ligand>
        <name>Fe cation</name>
        <dbReference type="ChEBI" id="CHEBI:24875"/>
        <note>catalytic</note>
    </ligand>
</feature>
<feature type="binding site" evidence="2">
    <location>
        <position position="202"/>
    </location>
    <ligand>
        <name>2-oxoglutarate</name>
        <dbReference type="ChEBI" id="CHEBI:16810"/>
    </ligand>
</feature>
<feature type="binding site" evidence="1">
    <location>
        <position position="209"/>
    </location>
    <ligand>
        <name>substrate</name>
    </ligand>
</feature>
<feature type="binding site" evidence="3">
    <location>
        <position position="278"/>
    </location>
    <ligand>
        <name>Fe cation</name>
        <dbReference type="ChEBI" id="CHEBI:24875"/>
        <note>catalytic</note>
    </ligand>
</feature>
<feature type="binding site" evidence="2">
    <location>
        <position position="290"/>
    </location>
    <ligand>
        <name>2-oxoglutarate</name>
        <dbReference type="ChEBI" id="CHEBI:16810"/>
    </ligand>
</feature>
<dbReference type="EC" id="1.14.11.-"/>
<dbReference type="EMBL" id="AE014297">
    <property type="protein sequence ID" value="AAF55975.1"/>
    <property type="molecule type" value="Genomic_DNA"/>
</dbReference>
<dbReference type="EMBL" id="AY051727">
    <property type="protein sequence ID" value="AAK93151.1"/>
    <property type="molecule type" value="mRNA"/>
</dbReference>
<dbReference type="RefSeq" id="NP_651026.1">
    <property type="nucleotide sequence ID" value="NM_142769.4"/>
</dbReference>
<dbReference type="SMR" id="Q9VD28"/>
<dbReference type="BioGRID" id="67574">
    <property type="interactions" value="47"/>
</dbReference>
<dbReference type="FunCoup" id="Q9VD28">
    <property type="interactions" value="1833"/>
</dbReference>
<dbReference type="IntAct" id="Q9VD28">
    <property type="interactions" value="30"/>
</dbReference>
<dbReference type="STRING" id="7227.FBpp0303404"/>
<dbReference type="PaxDb" id="7227-FBpp0083632"/>
<dbReference type="DNASU" id="42616"/>
<dbReference type="EnsemblMetazoa" id="FBtr0084239">
    <property type="protein sequence ID" value="FBpp0083632"/>
    <property type="gene ID" value="FBgn0038948"/>
</dbReference>
<dbReference type="GeneID" id="42616"/>
<dbReference type="KEGG" id="dme:Dmel_CG5383"/>
<dbReference type="AGR" id="FB:FBgn0038948"/>
<dbReference type="CTD" id="23210"/>
<dbReference type="FlyBase" id="FBgn0038948">
    <property type="gene designation" value="JMJD6"/>
</dbReference>
<dbReference type="VEuPathDB" id="VectorBase:FBgn0038948"/>
<dbReference type="eggNOG" id="KOG2130">
    <property type="taxonomic scope" value="Eukaryota"/>
</dbReference>
<dbReference type="GeneTree" id="ENSGT00940000156867"/>
<dbReference type="HOGENOM" id="CLU_016785_8_0_1"/>
<dbReference type="InParanoid" id="Q9VD28"/>
<dbReference type="OMA" id="NAWVAMR"/>
<dbReference type="OrthoDB" id="424465at2759"/>
<dbReference type="PhylomeDB" id="Q9VD28"/>
<dbReference type="Reactome" id="R-DME-3214842">
    <property type="pathway name" value="HDMs demethylate histones"/>
</dbReference>
<dbReference type="Reactome" id="R-DME-9629569">
    <property type="pathway name" value="Protein hydroxylation"/>
</dbReference>
<dbReference type="SignaLink" id="Q9VD28"/>
<dbReference type="BioGRID-ORCS" id="42616">
    <property type="hits" value="0 hits in 1 CRISPR screen"/>
</dbReference>
<dbReference type="GenomeRNAi" id="42616"/>
<dbReference type="PRO" id="PR:Q9VD28"/>
<dbReference type="Proteomes" id="UP000000803">
    <property type="component" value="Chromosome 3R"/>
</dbReference>
<dbReference type="Bgee" id="FBgn0038948">
    <property type="expression patterns" value="Expressed in interfollicle cell in ovary and 104 other cell types or tissues"/>
</dbReference>
<dbReference type="ExpressionAtlas" id="Q9VD28">
    <property type="expression patterns" value="baseline and differential"/>
</dbReference>
<dbReference type="GO" id="GO:0005737">
    <property type="term" value="C:cytoplasm"/>
    <property type="evidence" value="ECO:0000318"/>
    <property type="project" value="GO_Central"/>
</dbReference>
<dbReference type="GO" id="GO:0005730">
    <property type="term" value="C:nucleolus"/>
    <property type="evidence" value="ECO:0007669"/>
    <property type="project" value="UniProtKB-SubCell"/>
</dbReference>
<dbReference type="GO" id="GO:0005654">
    <property type="term" value="C:nucleoplasm"/>
    <property type="evidence" value="ECO:0007669"/>
    <property type="project" value="UniProtKB-SubCell"/>
</dbReference>
<dbReference type="GO" id="GO:0005634">
    <property type="term" value="C:nucleus"/>
    <property type="evidence" value="ECO:0000314"/>
    <property type="project" value="FlyBase"/>
</dbReference>
<dbReference type="GO" id="GO:0033746">
    <property type="term" value="F:histone H3R2 demethylase activity"/>
    <property type="evidence" value="ECO:0000250"/>
    <property type="project" value="FlyBase"/>
</dbReference>
<dbReference type="GO" id="GO:0033749">
    <property type="term" value="F:histone H4R3 demethylase activity"/>
    <property type="evidence" value="ECO:0000250"/>
    <property type="project" value="FlyBase"/>
</dbReference>
<dbReference type="GO" id="GO:0046872">
    <property type="term" value="F:metal ion binding"/>
    <property type="evidence" value="ECO:0007669"/>
    <property type="project" value="UniProtKB-KW"/>
</dbReference>
<dbReference type="GO" id="GO:0106140">
    <property type="term" value="F:P-TEFb complex binding"/>
    <property type="evidence" value="ECO:0000318"/>
    <property type="project" value="GO_Central"/>
</dbReference>
<dbReference type="GO" id="GO:0070815">
    <property type="term" value="F:peptidyl-lysine 5-dioxygenase activity"/>
    <property type="evidence" value="ECO:0000250"/>
    <property type="project" value="UniProtKB"/>
</dbReference>
<dbReference type="GO" id="GO:0035212">
    <property type="term" value="P:cell competition in a multicellular organism"/>
    <property type="evidence" value="ECO:0000315"/>
    <property type="project" value="FlyBase"/>
</dbReference>
<dbReference type="GO" id="GO:0048512">
    <property type="term" value="P:circadian behavior"/>
    <property type="evidence" value="ECO:0000315"/>
    <property type="project" value="UniProtKB"/>
</dbReference>
<dbReference type="GO" id="GO:0043066">
    <property type="term" value="P:negative regulation of apoptotic process"/>
    <property type="evidence" value="ECO:0000315"/>
    <property type="project" value="FlyBase"/>
</dbReference>
<dbReference type="GO" id="GO:0046329">
    <property type="term" value="P:negative regulation of JNK cascade"/>
    <property type="evidence" value="ECO:0000316"/>
    <property type="project" value="FlyBase"/>
</dbReference>
<dbReference type="GO" id="GO:0018395">
    <property type="term" value="P:peptidyl-lysine hydroxylation to 5-hydroxy-L-lysine"/>
    <property type="evidence" value="ECO:0000250"/>
    <property type="project" value="UniProtKB"/>
</dbReference>
<dbReference type="GO" id="GO:0006909">
    <property type="term" value="P:phagocytosis"/>
    <property type="evidence" value="ECO:0000318"/>
    <property type="project" value="GO_Central"/>
</dbReference>
<dbReference type="FunFam" id="1.20.1280.270:FF:000001">
    <property type="entry name" value="Bifunctional arginine demethylase and lysyl-hydroxylase JMJD6"/>
    <property type="match status" value="1"/>
</dbReference>
<dbReference type="FunFam" id="2.60.120.650:FF:000010">
    <property type="entry name" value="bifunctional arginine demethylase and lysyl-hydroxylase JMJD6 isoform X2"/>
    <property type="match status" value="1"/>
</dbReference>
<dbReference type="Gene3D" id="1.20.1280.270">
    <property type="match status" value="1"/>
</dbReference>
<dbReference type="Gene3D" id="2.60.120.650">
    <property type="entry name" value="Cupin"/>
    <property type="match status" value="1"/>
</dbReference>
<dbReference type="InterPro" id="IPR003347">
    <property type="entry name" value="JmjC_dom"/>
</dbReference>
<dbReference type="InterPro" id="IPR050910">
    <property type="entry name" value="JMJD6_ArgDemeth/LysHydrox"/>
</dbReference>
<dbReference type="PANTHER" id="PTHR12480">
    <property type="entry name" value="ARGININE DEMETHYLASE AND LYSYL-HYDROXYLASE JMJD"/>
    <property type="match status" value="1"/>
</dbReference>
<dbReference type="PANTHER" id="PTHR12480:SF32">
    <property type="entry name" value="BIFUNCTIONAL ARGININE DEMETHYLASE AND LYSYL-HYDROXYLASE JMJD6"/>
    <property type="match status" value="1"/>
</dbReference>
<dbReference type="Pfam" id="PF02373">
    <property type="entry name" value="JmjC"/>
    <property type="match status" value="1"/>
</dbReference>
<dbReference type="SMART" id="SM00558">
    <property type="entry name" value="JmjC"/>
    <property type="match status" value="1"/>
</dbReference>
<dbReference type="SUPFAM" id="SSF51197">
    <property type="entry name" value="Clavaminate synthase-like"/>
    <property type="match status" value="1"/>
</dbReference>
<dbReference type="PROSITE" id="PS51184">
    <property type="entry name" value="JMJC"/>
    <property type="match status" value="1"/>
</dbReference>
<gene>
    <name evidence="9" type="primary">JMJD6</name>
    <name evidence="9" type="synonym">PSR</name>
    <name evidence="9" type="ORF">CG5383</name>
</gene>
<protein>
    <recommendedName>
        <fullName evidence="8">Bifunctional arginine demethylase and lysyl-hydroxylase JMJD6</fullName>
        <ecNumber>1.14.11.-</ecNumber>
    </recommendedName>
    <alternativeName>
        <fullName evidence="9">Jumonji domain-containing protein 6</fullName>
    </alternativeName>
    <alternativeName>
        <fullName evidence="9">Phosphatidylserine receptor</fullName>
        <shortName evidence="8">dPSR</shortName>
    </alternativeName>
</protein>
<reference key="1">
    <citation type="journal article" date="2000" name="Science">
        <title>The genome sequence of Drosophila melanogaster.</title>
        <authorList>
            <person name="Adams M.D."/>
            <person name="Celniker S.E."/>
            <person name="Holt R.A."/>
            <person name="Evans C.A."/>
            <person name="Gocayne J.D."/>
            <person name="Amanatides P.G."/>
            <person name="Scherer S.E."/>
            <person name="Li P.W."/>
            <person name="Hoskins R.A."/>
            <person name="Galle R.F."/>
            <person name="George R.A."/>
            <person name="Lewis S.E."/>
            <person name="Richards S."/>
            <person name="Ashburner M."/>
            <person name="Henderson S.N."/>
            <person name="Sutton G.G."/>
            <person name="Wortman J.R."/>
            <person name="Yandell M.D."/>
            <person name="Zhang Q."/>
            <person name="Chen L.X."/>
            <person name="Brandon R.C."/>
            <person name="Rogers Y.-H.C."/>
            <person name="Blazej R.G."/>
            <person name="Champe M."/>
            <person name="Pfeiffer B.D."/>
            <person name="Wan K.H."/>
            <person name="Doyle C."/>
            <person name="Baxter E.G."/>
            <person name="Helt G."/>
            <person name="Nelson C.R."/>
            <person name="Miklos G.L.G."/>
            <person name="Abril J.F."/>
            <person name="Agbayani A."/>
            <person name="An H.-J."/>
            <person name="Andrews-Pfannkoch C."/>
            <person name="Baldwin D."/>
            <person name="Ballew R.M."/>
            <person name="Basu A."/>
            <person name="Baxendale J."/>
            <person name="Bayraktaroglu L."/>
            <person name="Beasley E.M."/>
            <person name="Beeson K.Y."/>
            <person name="Benos P.V."/>
            <person name="Berman B.P."/>
            <person name="Bhandari D."/>
            <person name="Bolshakov S."/>
            <person name="Borkova D."/>
            <person name="Botchan M.R."/>
            <person name="Bouck J."/>
            <person name="Brokstein P."/>
            <person name="Brottier P."/>
            <person name="Burtis K.C."/>
            <person name="Busam D.A."/>
            <person name="Butler H."/>
            <person name="Cadieu E."/>
            <person name="Center A."/>
            <person name="Chandra I."/>
            <person name="Cherry J.M."/>
            <person name="Cawley S."/>
            <person name="Dahlke C."/>
            <person name="Davenport L.B."/>
            <person name="Davies P."/>
            <person name="de Pablos B."/>
            <person name="Delcher A."/>
            <person name="Deng Z."/>
            <person name="Mays A.D."/>
            <person name="Dew I."/>
            <person name="Dietz S.M."/>
            <person name="Dodson K."/>
            <person name="Doup L.E."/>
            <person name="Downes M."/>
            <person name="Dugan-Rocha S."/>
            <person name="Dunkov B.C."/>
            <person name="Dunn P."/>
            <person name="Durbin K.J."/>
            <person name="Evangelista C.C."/>
            <person name="Ferraz C."/>
            <person name="Ferriera S."/>
            <person name="Fleischmann W."/>
            <person name="Fosler C."/>
            <person name="Gabrielian A.E."/>
            <person name="Garg N.S."/>
            <person name="Gelbart W.M."/>
            <person name="Glasser K."/>
            <person name="Glodek A."/>
            <person name="Gong F."/>
            <person name="Gorrell J.H."/>
            <person name="Gu Z."/>
            <person name="Guan P."/>
            <person name="Harris M."/>
            <person name="Harris N.L."/>
            <person name="Harvey D.A."/>
            <person name="Heiman T.J."/>
            <person name="Hernandez J.R."/>
            <person name="Houck J."/>
            <person name="Hostin D."/>
            <person name="Houston K.A."/>
            <person name="Howland T.J."/>
            <person name="Wei M.-H."/>
            <person name="Ibegwam C."/>
            <person name="Jalali M."/>
            <person name="Kalush F."/>
            <person name="Karpen G.H."/>
            <person name="Ke Z."/>
            <person name="Kennison J.A."/>
            <person name="Ketchum K.A."/>
            <person name="Kimmel B.E."/>
            <person name="Kodira C.D."/>
            <person name="Kraft C.L."/>
            <person name="Kravitz S."/>
            <person name="Kulp D."/>
            <person name="Lai Z."/>
            <person name="Lasko P."/>
            <person name="Lei Y."/>
            <person name="Levitsky A.A."/>
            <person name="Li J.H."/>
            <person name="Li Z."/>
            <person name="Liang Y."/>
            <person name="Lin X."/>
            <person name="Liu X."/>
            <person name="Mattei B."/>
            <person name="McIntosh T.C."/>
            <person name="McLeod M.P."/>
            <person name="McPherson D."/>
            <person name="Merkulov G."/>
            <person name="Milshina N.V."/>
            <person name="Mobarry C."/>
            <person name="Morris J."/>
            <person name="Moshrefi A."/>
            <person name="Mount S.M."/>
            <person name="Moy M."/>
            <person name="Murphy B."/>
            <person name="Murphy L."/>
            <person name="Muzny D.M."/>
            <person name="Nelson D.L."/>
            <person name="Nelson D.R."/>
            <person name="Nelson K.A."/>
            <person name="Nixon K."/>
            <person name="Nusskern D.R."/>
            <person name="Pacleb J.M."/>
            <person name="Palazzolo M."/>
            <person name="Pittman G.S."/>
            <person name="Pan S."/>
            <person name="Pollard J."/>
            <person name="Puri V."/>
            <person name="Reese M.G."/>
            <person name="Reinert K."/>
            <person name="Remington K."/>
            <person name="Saunders R.D.C."/>
            <person name="Scheeler F."/>
            <person name="Shen H."/>
            <person name="Shue B.C."/>
            <person name="Siden-Kiamos I."/>
            <person name="Simpson M."/>
            <person name="Skupski M.P."/>
            <person name="Smith T.J."/>
            <person name="Spier E."/>
            <person name="Spradling A.C."/>
            <person name="Stapleton M."/>
            <person name="Strong R."/>
            <person name="Sun E."/>
            <person name="Svirskas R."/>
            <person name="Tector C."/>
            <person name="Turner R."/>
            <person name="Venter E."/>
            <person name="Wang A.H."/>
            <person name="Wang X."/>
            <person name="Wang Z.-Y."/>
            <person name="Wassarman D.A."/>
            <person name="Weinstock G.M."/>
            <person name="Weissenbach J."/>
            <person name="Williams S.M."/>
            <person name="Woodage T."/>
            <person name="Worley K.C."/>
            <person name="Wu D."/>
            <person name="Yang S."/>
            <person name="Yao Q.A."/>
            <person name="Ye J."/>
            <person name="Yeh R.-F."/>
            <person name="Zaveri J.S."/>
            <person name="Zhan M."/>
            <person name="Zhang G."/>
            <person name="Zhao Q."/>
            <person name="Zheng L."/>
            <person name="Zheng X.H."/>
            <person name="Zhong F.N."/>
            <person name="Zhong W."/>
            <person name="Zhou X."/>
            <person name="Zhu S.C."/>
            <person name="Zhu X."/>
            <person name="Smith H.O."/>
            <person name="Gibbs R.A."/>
            <person name="Myers E.W."/>
            <person name="Rubin G.M."/>
            <person name="Venter J.C."/>
        </authorList>
    </citation>
    <scope>NUCLEOTIDE SEQUENCE [LARGE SCALE GENOMIC DNA]</scope>
    <source>
        <strain>Berkeley</strain>
    </source>
</reference>
<reference key="2">
    <citation type="journal article" date="2002" name="Genome Biol.">
        <title>Annotation of the Drosophila melanogaster euchromatic genome: a systematic review.</title>
        <authorList>
            <person name="Misra S."/>
            <person name="Crosby M.A."/>
            <person name="Mungall C.J."/>
            <person name="Matthews B.B."/>
            <person name="Campbell K.S."/>
            <person name="Hradecky P."/>
            <person name="Huang Y."/>
            <person name="Kaminker J.S."/>
            <person name="Millburn G.H."/>
            <person name="Prochnik S.E."/>
            <person name="Smith C.D."/>
            <person name="Tupy J.L."/>
            <person name="Whitfield E.J."/>
            <person name="Bayraktaroglu L."/>
            <person name="Berman B.P."/>
            <person name="Bettencourt B.R."/>
            <person name="Celniker S.E."/>
            <person name="de Grey A.D.N.J."/>
            <person name="Drysdale R.A."/>
            <person name="Harris N.L."/>
            <person name="Richter J."/>
            <person name="Russo S."/>
            <person name="Schroeder A.J."/>
            <person name="Shu S.Q."/>
            <person name="Stapleton M."/>
            <person name="Yamada C."/>
            <person name="Ashburner M."/>
            <person name="Gelbart W.M."/>
            <person name="Rubin G.M."/>
            <person name="Lewis S.E."/>
        </authorList>
    </citation>
    <scope>GENOME REANNOTATION</scope>
    <source>
        <strain>Berkeley</strain>
    </source>
</reference>
<reference key="3">
    <citation type="journal article" date="2002" name="Genome Biol.">
        <title>A Drosophila full-length cDNA resource.</title>
        <authorList>
            <person name="Stapleton M."/>
            <person name="Carlson J.W."/>
            <person name="Brokstein P."/>
            <person name="Yu C."/>
            <person name="Champe M."/>
            <person name="George R.A."/>
            <person name="Guarin H."/>
            <person name="Kronmiller B."/>
            <person name="Pacleb J.M."/>
            <person name="Park S."/>
            <person name="Wan K.H."/>
            <person name="Rubin G.M."/>
            <person name="Celniker S.E."/>
        </authorList>
    </citation>
    <scope>NUCLEOTIDE SEQUENCE [LARGE SCALE MRNA]</scope>
    <source>
        <strain>Berkeley</strain>
        <tissue>Embryo</tissue>
    </source>
</reference>
<reference key="4">
    <citation type="journal article" date="2007" name="Development">
        <title>The Drosophila homolog of the putative phosphatidylserine receptor functions to inhibit apoptosis.</title>
        <authorList>
            <person name="Krieser R.J."/>
            <person name="Moore F.E."/>
            <person name="Dresnek D."/>
            <person name="Pellock B.J."/>
            <person name="Patel R."/>
            <person name="Huang A."/>
            <person name="Brachmann C."/>
            <person name="White K."/>
        </authorList>
    </citation>
    <scope>FUNCTION</scope>
    <scope>SUBCELLULAR LOCATION</scope>
    <scope>DISRUPTION PHENOTYPE</scope>
</reference>
<reference key="5">
    <citation type="journal article" date="2017" name="Sci. Rep.">
        <title>Systematic discovery of genetic modulation by Jumonji histone demethylases in Drosophila.</title>
        <authorList>
            <person name="Shalaby N.A."/>
            <person name="Sayed R."/>
            <person name="Zhang Q."/>
            <person name="Scoggin S."/>
            <person name="Eliazer S."/>
            <person name="Rothenfluh A."/>
            <person name="Buszczak M."/>
        </authorList>
    </citation>
    <scope>FUNCTION</scope>
    <scope>SUBCELLULAR LOCATION</scope>
    <scope>DISRUPTION PHENOTYPE</scope>
</reference>
<reference key="6">
    <citation type="journal article" date="2018" name="Sci. Rep.">
        <title>JmjC domain proteins modulate circadian behaviors and sleep in Drosophila.</title>
        <authorList>
            <person name="Shalaby N.A."/>
            <person name="Pinzon J.H."/>
            <person name="Narayanan A.S."/>
            <person name="Jin E.J."/>
            <person name="Ritz M.P."/>
            <person name="Dove R.J."/>
            <person name="Wolfenberg H."/>
            <person name="Rodan A.R."/>
            <person name="Buszczak M."/>
            <person name="Rothenfluh A."/>
        </authorList>
    </citation>
    <scope>FUNCTION</scope>
    <scope>DISRUPTION PHENOTYPE</scope>
</reference>
<comment type="function">
    <text evidence="2 5 6 7">Dioxygenase that can both act as a histone arginine demethylase and a lysyl-hydroxylase (By similarity). Negative regulator of apoptosis; functions upstream of hid possibly by acting on the JNK signaling pathway (PubMed:17522160). Not required for apoptotic cell clearance by macrophages in the developing embryo (PubMed:17522160). May be involved in regulation of chromatin structure, promoting expansion of euchromatin (PubMed:28701701). May be involved in regulation of behavior and circadian rhythms (PubMed:29339751).</text>
</comment>
<comment type="cofactor">
    <cofactor evidence="2">
        <name>Fe(2+)</name>
        <dbReference type="ChEBI" id="CHEBI:29033"/>
    </cofactor>
    <text evidence="2">Binds 1 Fe(2+) ion per subunit.</text>
</comment>
<comment type="subcellular location">
    <subcellularLocation>
        <location evidence="5 6">Nucleus</location>
    </subcellularLocation>
    <subcellularLocation>
        <location evidence="6">Nucleus</location>
        <location evidence="6">Nucleoplasm</location>
    </subcellularLocation>
    <subcellularLocation>
        <location evidence="2">Nucleus</location>
        <location evidence="2">Nucleolus</location>
    </subcellularLocation>
    <subcellularLocation>
        <location evidence="2">Cytoplasm</location>
    </subcellularLocation>
    <text evidence="2">Mainly found throughout the nucleoplasm.</text>
</comment>
<comment type="disruption phenotype">
    <text evidence="5 6 7">Viable and fertile with no obvious morphological defects (PubMed:17522160, PubMed:28701701). Loss of interommatidial cells and increased levels of ommatidial fusion due to increased levels of apoptosis during the pupal phase of eye development (PubMed:17522160). No effect on apoptotic cell engulfment by phagocytic hemocytes (macrophages) (PubMed:17522160). Adults possess disrupted circadian rhythms with increased levels of night time sleep (PubMed:29339751).</text>
</comment>
<comment type="similarity">
    <text evidence="8">Belongs to the JMJD6 family.</text>
</comment>
<name>JMJD6_DROME</name>
<evidence type="ECO:0000250" key="1"/>
<evidence type="ECO:0000250" key="2">
    <source>
        <dbReference type="UniProtKB" id="Q6NYC1"/>
    </source>
</evidence>
<evidence type="ECO:0000255" key="3">
    <source>
        <dbReference type="PROSITE-ProRule" id="PRU00538"/>
    </source>
</evidence>
<evidence type="ECO:0000256" key="4">
    <source>
        <dbReference type="SAM" id="MobiDB-lite"/>
    </source>
</evidence>
<evidence type="ECO:0000269" key="5">
    <source>
    </source>
</evidence>
<evidence type="ECO:0000269" key="6">
    <source>
    </source>
</evidence>
<evidence type="ECO:0000269" key="7">
    <source>
    </source>
</evidence>
<evidence type="ECO:0000305" key="8"/>
<evidence type="ECO:0000312" key="9">
    <source>
        <dbReference type="FlyBase" id="FBgn0038948"/>
    </source>
</evidence>
<evidence type="ECO:0000312" key="10">
    <source>
        <dbReference type="Proteomes" id="UP000000803"/>
    </source>
</evidence>
<keyword id="KW-0053">Apoptosis</keyword>
<keyword id="KW-0156">Chromatin regulator</keyword>
<keyword id="KW-0963">Cytoplasm</keyword>
<keyword id="KW-0223">Dioxygenase</keyword>
<keyword id="KW-0408">Iron</keyword>
<keyword id="KW-0479">Metal-binding</keyword>
<keyword id="KW-0539">Nucleus</keyword>
<keyword id="KW-0560">Oxidoreductase</keyword>
<keyword id="KW-1185">Reference proteome</keyword>
<keyword id="KW-0804">Transcription</keyword>
<keyword id="KW-0805">Transcription regulation</keyword>
<proteinExistence type="evidence at transcript level"/>
<sequence length="408" mass="47006">MSEEFKLPKRSRKRTREVKRKARPELDGENAWSAMRYCEKFEPFWDFTDNLERIEESQVPESEFIERFERPYKPVVIRGCTDGWLALEKWTLARLAKKYRNQKFKCGEDNEGYSVKMKMKYYVEYMQSTRDDSPLYIFDSSFGEHHRRRKLLDDYVVPKYFRDDLFQYCGENRRPPYRWFVMGPARSGTGIHIDPLGTSAWNTLIRGHKRWCLFPTQTPKELLKVTSAMGGKQRDEAITWFSTIYPRTQLPSWPEQYRPIEVLQGAGETVFVPGGWWHVVLNMDDTIAITQNFSSQTNFPCVWHKTVRGRPKLSRKWLRVLRDQRPELAQIADSINLNESTGFASDSSSNSSSSSSSSSSSSEEEESDDGGDSNTDSGQESLTAKKKKKRRMAGGGSGSGSMGGSSRS</sequence>